<protein>
    <recommendedName>
        <fullName>Mitochondrial import inner membrane translocase subunit tim16</fullName>
    </recommendedName>
    <alternativeName>
        <fullName>Presequence translocated-associated motor subunit pam16</fullName>
    </alternativeName>
</protein>
<accession>Q5B187</accession>
<accession>C8VFQ0</accession>
<feature type="chain" id="PRO_0000214092" description="Mitochondrial import inner membrane translocase subunit tim16">
    <location>
        <begin position="1"/>
        <end position="135"/>
    </location>
</feature>
<feature type="region of interest" description="Disordered" evidence="2">
    <location>
        <begin position="30"/>
        <end position="49"/>
    </location>
</feature>
<feature type="region of interest" description="J-like">
    <location>
        <begin position="54"/>
        <end position="111"/>
    </location>
</feature>
<feature type="region of interest" description="Disordered" evidence="2">
    <location>
        <begin position="114"/>
        <end position="135"/>
    </location>
</feature>
<feature type="compositionally biased region" description="Low complexity" evidence="2">
    <location>
        <begin position="39"/>
        <end position="49"/>
    </location>
</feature>
<keyword id="KW-0472">Membrane</keyword>
<keyword id="KW-0496">Mitochondrion</keyword>
<keyword id="KW-0999">Mitochondrion inner membrane</keyword>
<keyword id="KW-0653">Protein transport</keyword>
<keyword id="KW-1185">Reference proteome</keyword>
<keyword id="KW-0811">Translocation</keyword>
<keyword id="KW-0813">Transport</keyword>
<gene>
    <name type="primary">pam16</name>
    <name type="synonym">tim16</name>
    <name type="ORF">AN5693</name>
</gene>
<evidence type="ECO:0000250" key="1"/>
<evidence type="ECO:0000256" key="2">
    <source>
        <dbReference type="SAM" id="MobiDB-lite"/>
    </source>
</evidence>
<evidence type="ECO:0000305" key="3"/>
<organism>
    <name type="scientific">Emericella nidulans (strain FGSC A4 / ATCC 38163 / CBS 112.46 / NRRL 194 / M139)</name>
    <name type="common">Aspergillus nidulans</name>
    <dbReference type="NCBI Taxonomy" id="227321"/>
    <lineage>
        <taxon>Eukaryota</taxon>
        <taxon>Fungi</taxon>
        <taxon>Dikarya</taxon>
        <taxon>Ascomycota</taxon>
        <taxon>Pezizomycotina</taxon>
        <taxon>Eurotiomycetes</taxon>
        <taxon>Eurotiomycetidae</taxon>
        <taxon>Eurotiales</taxon>
        <taxon>Aspergillaceae</taxon>
        <taxon>Aspergillus</taxon>
        <taxon>Aspergillus subgen. Nidulantes</taxon>
    </lineage>
</organism>
<proteinExistence type="inferred from homology"/>
<dbReference type="EMBL" id="AACD01000098">
    <property type="protein sequence ID" value="EAA62786.1"/>
    <property type="molecule type" value="Genomic_DNA"/>
</dbReference>
<dbReference type="EMBL" id="BN001305">
    <property type="protein sequence ID" value="CBF81393.1"/>
    <property type="molecule type" value="Genomic_DNA"/>
</dbReference>
<dbReference type="RefSeq" id="XP_663297.1">
    <property type="nucleotide sequence ID" value="XM_658205.1"/>
</dbReference>
<dbReference type="SMR" id="Q5B187"/>
<dbReference type="FunCoup" id="Q5B187">
    <property type="interactions" value="232"/>
</dbReference>
<dbReference type="STRING" id="227321.Q5B187"/>
<dbReference type="EnsemblFungi" id="CBF81393">
    <property type="protein sequence ID" value="CBF81393"/>
    <property type="gene ID" value="ANIA_05693"/>
</dbReference>
<dbReference type="KEGG" id="ani:ANIA_05693"/>
<dbReference type="VEuPathDB" id="FungiDB:AN5693"/>
<dbReference type="eggNOG" id="KOG3442">
    <property type="taxonomic scope" value="Eukaryota"/>
</dbReference>
<dbReference type="HOGENOM" id="CLU_101461_0_1_1"/>
<dbReference type="InParanoid" id="Q5B187"/>
<dbReference type="OMA" id="AKYLIQI"/>
<dbReference type="OrthoDB" id="10262892at2759"/>
<dbReference type="Proteomes" id="UP000000560">
    <property type="component" value="Chromosome V"/>
</dbReference>
<dbReference type="GO" id="GO:0001405">
    <property type="term" value="C:PAM complex, Tim23 associated import motor"/>
    <property type="evidence" value="ECO:0007669"/>
    <property type="project" value="EnsemblFungi"/>
</dbReference>
<dbReference type="GO" id="GO:0005744">
    <property type="term" value="C:TIM23 mitochondrial import inner membrane translocase complex"/>
    <property type="evidence" value="ECO:0000318"/>
    <property type="project" value="GO_Central"/>
</dbReference>
<dbReference type="GO" id="GO:0019904">
    <property type="term" value="F:protein domain specific binding"/>
    <property type="evidence" value="ECO:0007669"/>
    <property type="project" value="EnsemblFungi"/>
</dbReference>
<dbReference type="GO" id="GO:0030150">
    <property type="term" value="P:protein import into mitochondrial matrix"/>
    <property type="evidence" value="ECO:0000318"/>
    <property type="project" value="GO_Central"/>
</dbReference>
<dbReference type="FunFam" id="1.10.287.110:FF:000006">
    <property type="entry name" value="Import inner membrane translocase subunit TIM16"/>
    <property type="match status" value="1"/>
</dbReference>
<dbReference type="Gene3D" id="1.10.287.110">
    <property type="entry name" value="DnaJ domain"/>
    <property type="match status" value="1"/>
</dbReference>
<dbReference type="InterPro" id="IPR036869">
    <property type="entry name" value="J_dom_sf"/>
</dbReference>
<dbReference type="InterPro" id="IPR005341">
    <property type="entry name" value="Tim16"/>
</dbReference>
<dbReference type="PANTHER" id="PTHR12388">
    <property type="entry name" value="MITOCHONDRIA ASSOCIATED GRANULOCYTE MACROPHAGE CSF SIGNALING MOLECULE"/>
    <property type="match status" value="1"/>
</dbReference>
<dbReference type="PANTHER" id="PTHR12388:SF0">
    <property type="entry name" value="MITOCHONDRIAL IMPORT INNER MEMBRANE TRANSLOCASE SUBUNIT TIM16"/>
    <property type="match status" value="1"/>
</dbReference>
<dbReference type="Pfam" id="PF03656">
    <property type="entry name" value="Pam16"/>
    <property type="match status" value="1"/>
</dbReference>
<reference key="1">
    <citation type="journal article" date="2005" name="Nature">
        <title>Sequencing of Aspergillus nidulans and comparative analysis with A. fumigatus and A. oryzae.</title>
        <authorList>
            <person name="Galagan J.E."/>
            <person name="Calvo S.E."/>
            <person name="Cuomo C."/>
            <person name="Ma L.-J."/>
            <person name="Wortman J.R."/>
            <person name="Batzoglou S."/>
            <person name="Lee S.-I."/>
            <person name="Bastuerkmen M."/>
            <person name="Spevak C.C."/>
            <person name="Clutterbuck J."/>
            <person name="Kapitonov V."/>
            <person name="Jurka J."/>
            <person name="Scazzocchio C."/>
            <person name="Farman M.L."/>
            <person name="Butler J."/>
            <person name="Purcell S."/>
            <person name="Harris S."/>
            <person name="Braus G.H."/>
            <person name="Draht O."/>
            <person name="Busch S."/>
            <person name="D'Enfert C."/>
            <person name="Bouchier C."/>
            <person name="Goldman G.H."/>
            <person name="Bell-Pedersen D."/>
            <person name="Griffiths-Jones S."/>
            <person name="Doonan J.H."/>
            <person name="Yu J."/>
            <person name="Vienken K."/>
            <person name="Pain A."/>
            <person name="Freitag M."/>
            <person name="Selker E.U."/>
            <person name="Archer D.B."/>
            <person name="Penalva M.A."/>
            <person name="Oakley B.R."/>
            <person name="Momany M."/>
            <person name="Tanaka T."/>
            <person name="Kumagai T."/>
            <person name="Asai K."/>
            <person name="Machida M."/>
            <person name="Nierman W.C."/>
            <person name="Denning D.W."/>
            <person name="Caddick M.X."/>
            <person name="Hynes M."/>
            <person name="Paoletti M."/>
            <person name="Fischer R."/>
            <person name="Miller B.L."/>
            <person name="Dyer P.S."/>
            <person name="Sachs M.S."/>
            <person name="Osmani S.A."/>
            <person name="Birren B.W."/>
        </authorList>
    </citation>
    <scope>NUCLEOTIDE SEQUENCE [LARGE SCALE GENOMIC DNA]</scope>
    <source>
        <strain>FGSC A4 / ATCC 38163 / CBS 112.46 / NRRL 194 / M139</strain>
    </source>
</reference>
<reference key="2">
    <citation type="journal article" date="2009" name="Fungal Genet. Biol.">
        <title>The 2008 update of the Aspergillus nidulans genome annotation: a community effort.</title>
        <authorList>
            <person name="Wortman J.R."/>
            <person name="Gilsenan J.M."/>
            <person name="Joardar V."/>
            <person name="Deegan J."/>
            <person name="Clutterbuck J."/>
            <person name="Andersen M.R."/>
            <person name="Archer D."/>
            <person name="Bencina M."/>
            <person name="Braus G."/>
            <person name="Coutinho P."/>
            <person name="von Dohren H."/>
            <person name="Doonan J."/>
            <person name="Driessen A.J."/>
            <person name="Durek P."/>
            <person name="Espeso E."/>
            <person name="Fekete E."/>
            <person name="Flipphi M."/>
            <person name="Estrada C.G."/>
            <person name="Geysens S."/>
            <person name="Goldman G."/>
            <person name="de Groot P.W."/>
            <person name="Hansen K."/>
            <person name="Harris S.D."/>
            <person name="Heinekamp T."/>
            <person name="Helmstaedt K."/>
            <person name="Henrissat B."/>
            <person name="Hofmann G."/>
            <person name="Homan T."/>
            <person name="Horio T."/>
            <person name="Horiuchi H."/>
            <person name="James S."/>
            <person name="Jones M."/>
            <person name="Karaffa L."/>
            <person name="Karanyi Z."/>
            <person name="Kato M."/>
            <person name="Keller N."/>
            <person name="Kelly D.E."/>
            <person name="Kiel J.A."/>
            <person name="Kim J.M."/>
            <person name="van der Klei I.J."/>
            <person name="Klis F.M."/>
            <person name="Kovalchuk A."/>
            <person name="Krasevec N."/>
            <person name="Kubicek C.P."/>
            <person name="Liu B."/>
            <person name="Maccabe A."/>
            <person name="Meyer V."/>
            <person name="Mirabito P."/>
            <person name="Miskei M."/>
            <person name="Mos M."/>
            <person name="Mullins J."/>
            <person name="Nelson D.R."/>
            <person name="Nielsen J."/>
            <person name="Oakley B.R."/>
            <person name="Osmani S.A."/>
            <person name="Pakula T."/>
            <person name="Paszewski A."/>
            <person name="Paulsen I."/>
            <person name="Pilsyk S."/>
            <person name="Pocsi I."/>
            <person name="Punt P.J."/>
            <person name="Ram A.F."/>
            <person name="Ren Q."/>
            <person name="Robellet X."/>
            <person name="Robson G."/>
            <person name="Seiboth B."/>
            <person name="van Solingen P."/>
            <person name="Specht T."/>
            <person name="Sun J."/>
            <person name="Taheri-Talesh N."/>
            <person name="Takeshita N."/>
            <person name="Ussery D."/>
            <person name="vanKuyk P.A."/>
            <person name="Visser H."/>
            <person name="van de Vondervoort P.J."/>
            <person name="de Vries R.P."/>
            <person name="Walton J."/>
            <person name="Xiang X."/>
            <person name="Xiong Y."/>
            <person name="Zeng A.P."/>
            <person name="Brandt B.W."/>
            <person name="Cornell M.J."/>
            <person name="van den Hondel C.A."/>
            <person name="Visser J."/>
            <person name="Oliver S.G."/>
            <person name="Turner G."/>
        </authorList>
    </citation>
    <scope>GENOME REANNOTATION</scope>
    <source>
        <strain>FGSC A4 / ATCC 38163 / CBS 112.46 / NRRL 194 / M139</strain>
    </source>
</reference>
<comment type="function">
    <text evidence="1">Essential component of the PAM complex, a complex required for the translocation of transit peptide-containing proteins from the inner membrane into the mitochondrial matrix in an ATP-dependent manner. In the complex, it is required to regulate activity of mtHSP70 (SSC1/sscA) via its interaction with PAM18/TIM14. May act by positioning PAM18/pamR in juxtaposition to mtHSP70 at the translocon to maximize ATPase stimulation (By similarity).</text>
</comment>
<comment type="subunit">
    <text evidence="1">Heterodimer with PAM18/pamR. Component of the PAM complex, at least composed of mtHsp70, MGE1/mgeA, tim44, PAM16/pamP, PAM17/pamQ and PAM18/pamR (By similarity).</text>
</comment>
<comment type="subcellular location">
    <subcellularLocation>
        <location evidence="1">Mitochondrion inner membrane</location>
        <topology evidence="1">Peripheral membrane protein</topology>
    </subcellularLocation>
</comment>
<comment type="domain">
    <text evidence="1">The J-like region, although related to the J domain does not stimulate ATPase activity of mtHSP70. It nevertheless mediates the heterodimerization with the J domain of PAM18 and is therefore essential for PAM complex function (By similarity).</text>
</comment>
<comment type="similarity">
    <text evidence="3">Belongs to the TIM16/PAM16 family.</text>
</comment>
<name>TIM16_EMENI</name>
<sequence length="135" mass="15100">MAHRIVTQVVVTGARVFGRAFAEAYKQASAASKYQQKTGKSAGGSSSSGITLDEACKILNVKPPQAGETNLEQVMERFKKLFDLNDPQKGGSFYLQSKILRARERIEAEVREAERKAAHEKELKEGWKPKVYKDR</sequence>